<comment type="function">
    <text evidence="1">NDH-1 shuttles electrons from NADH, via FMN and iron-sulfur (Fe-S) centers, to quinones in the respiratory chain. The immediate electron acceptor for the enzyme in this species is believed to be ubiquinone. Couples the redox reaction to proton translocation (for every two electrons transferred, four hydrogen ions are translocated across the cytoplasmic membrane), and thus conserves the redox energy in a proton gradient.</text>
</comment>
<comment type="catalytic activity">
    <reaction evidence="1">
        <text>a quinone + NADH + 5 H(+)(in) = a quinol + NAD(+) + 4 H(+)(out)</text>
        <dbReference type="Rhea" id="RHEA:57888"/>
        <dbReference type="ChEBI" id="CHEBI:15378"/>
        <dbReference type="ChEBI" id="CHEBI:24646"/>
        <dbReference type="ChEBI" id="CHEBI:57540"/>
        <dbReference type="ChEBI" id="CHEBI:57945"/>
        <dbReference type="ChEBI" id="CHEBI:132124"/>
    </reaction>
</comment>
<comment type="cofactor">
    <cofactor evidence="1">
        <name>[4Fe-4S] cluster</name>
        <dbReference type="ChEBI" id="CHEBI:49883"/>
    </cofactor>
    <text evidence="1">Binds 2 [4Fe-4S] clusters per subunit.</text>
</comment>
<comment type="subunit">
    <text evidence="1">NDH-1 is composed of 14 different subunits. Subunits NuoA, H, J, K, L, M, N constitute the membrane sector of the complex.</text>
</comment>
<comment type="subcellular location">
    <subcellularLocation>
        <location evidence="1">Cell inner membrane</location>
        <topology evidence="1">Peripheral membrane protein</topology>
    </subcellularLocation>
</comment>
<comment type="similarity">
    <text evidence="1">Belongs to the complex I 23 kDa subunit family.</text>
</comment>
<reference key="1">
    <citation type="journal article" date="2006" name="Genome Biol.">
        <title>The genome of Rhizobium leguminosarum has recognizable core and accessory components.</title>
        <authorList>
            <person name="Young J.P.W."/>
            <person name="Crossman L.C."/>
            <person name="Johnston A.W.B."/>
            <person name="Thomson N.R."/>
            <person name="Ghazoui Z.F."/>
            <person name="Hull K.H."/>
            <person name="Wexler M."/>
            <person name="Curson A.R.J."/>
            <person name="Todd J.D."/>
            <person name="Poole P.S."/>
            <person name="Mauchline T.H."/>
            <person name="East A.K."/>
            <person name="Quail M.A."/>
            <person name="Churcher C."/>
            <person name="Arrowsmith C."/>
            <person name="Cherevach I."/>
            <person name="Chillingworth T."/>
            <person name="Clarke K."/>
            <person name="Cronin A."/>
            <person name="Davis P."/>
            <person name="Fraser A."/>
            <person name="Hance Z."/>
            <person name="Hauser H."/>
            <person name="Jagels K."/>
            <person name="Moule S."/>
            <person name="Mungall K."/>
            <person name="Norbertczak H."/>
            <person name="Rabbinowitsch E."/>
            <person name="Sanders M."/>
            <person name="Simmonds M."/>
            <person name="Whitehead S."/>
            <person name="Parkhill J."/>
        </authorList>
    </citation>
    <scope>NUCLEOTIDE SEQUENCE [LARGE SCALE GENOMIC DNA]</scope>
    <source>
        <strain>DSM 114642 / LMG 32736 / 3841</strain>
    </source>
</reference>
<organism>
    <name type="scientific">Rhizobium johnstonii (strain DSM 114642 / LMG 32736 / 3841)</name>
    <name type="common">Rhizobium leguminosarum bv. viciae</name>
    <dbReference type="NCBI Taxonomy" id="216596"/>
    <lineage>
        <taxon>Bacteria</taxon>
        <taxon>Pseudomonadati</taxon>
        <taxon>Pseudomonadota</taxon>
        <taxon>Alphaproteobacteria</taxon>
        <taxon>Hyphomicrobiales</taxon>
        <taxon>Rhizobiaceae</taxon>
        <taxon>Rhizobium/Agrobacterium group</taxon>
        <taxon>Rhizobium</taxon>
        <taxon>Rhizobium johnstonii</taxon>
    </lineage>
</organism>
<keyword id="KW-0004">4Fe-4S</keyword>
<keyword id="KW-0997">Cell inner membrane</keyword>
<keyword id="KW-1003">Cell membrane</keyword>
<keyword id="KW-0408">Iron</keyword>
<keyword id="KW-0411">Iron-sulfur</keyword>
<keyword id="KW-0472">Membrane</keyword>
<keyword id="KW-0479">Metal-binding</keyword>
<keyword id="KW-0520">NAD</keyword>
<keyword id="KW-0874">Quinone</keyword>
<keyword id="KW-0677">Repeat</keyword>
<keyword id="KW-1278">Translocase</keyword>
<keyword id="KW-0830">Ubiquinone</keyword>
<evidence type="ECO:0000255" key="1">
    <source>
        <dbReference type="HAMAP-Rule" id="MF_01351"/>
    </source>
</evidence>
<accession>Q1MIK6</accession>
<gene>
    <name evidence="1" type="primary">nuoI</name>
    <name type="ordered locus">RL1709</name>
</gene>
<dbReference type="EC" id="7.1.1.-" evidence="1"/>
<dbReference type="EMBL" id="AM236080">
    <property type="protein sequence ID" value="CAK07204.1"/>
    <property type="molecule type" value="Genomic_DNA"/>
</dbReference>
<dbReference type="RefSeq" id="WP_003547385.1">
    <property type="nucleotide sequence ID" value="NC_008380.1"/>
</dbReference>
<dbReference type="SMR" id="Q1MIK6"/>
<dbReference type="EnsemblBacteria" id="CAK07204">
    <property type="protein sequence ID" value="CAK07204"/>
    <property type="gene ID" value="RL1709"/>
</dbReference>
<dbReference type="GeneID" id="84669414"/>
<dbReference type="KEGG" id="rle:RL1709"/>
<dbReference type="eggNOG" id="COG1143">
    <property type="taxonomic scope" value="Bacteria"/>
</dbReference>
<dbReference type="HOGENOM" id="CLU_067218_5_1_5"/>
<dbReference type="Proteomes" id="UP000006575">
    <property type="component" value="Chromosome"/>
</dbReference>
<dbReference type="GO" id="GO:0005886">
    <property type="term" value="C:plasma membrane"/>
    <property type="evidence" value="ECO:0007669"/>
    <property type="project" value="UniProtKB-SubCell"/>
</dbReference>
<dbReference type="GO" id="GO:0051539">
    <property type="term" value="F:4 iron, 4 sulfur cluster binding"/>
    <property type="evidence" value="ECO:0007669"/>
    <property type="project" value="UniProtKB-KW"/>
</dbReference>
<dbReference type="GO" id="GO:0005506">
    <property type="term" value="F:iron ion binding"/>
    <property type="evidence" value="ECO:0007669"/>
    <property type="project" value="UniProtKB-UniRule"/>
</dbReference>
<dbReference type="GO" id="GO:0050136">
    <property type="term" value="F:NADH:ubiquinone reductase (non-electrogenic) activity"/>
    <property type="evidence" value="ECO:0007669"/>
    <property type="project" value="UniProtKB-UniRule"/>
</dbReference>
<dbReference type="GO" id="GO:0048038">
    <property type="term" value="F:quinone binding"/>
    <property type="evidence" value="ECO:0007669"/>
    <property type="project" value="UniProtKB-KW"/>
</dbReference>
<dbReference type="GO" id="GO:0009060">
    <property type="term" value="P:aerobic respiration"/>
    <property type="evidence" value="ECO:0007669"/>
    <property type="project" value="TreeGrafter"/>
</dbReference>
<dbReference type="FunFam" id="3.30.70.3270:FF:000001">
    <property type="entry name" value="NADH-quinone oxidoreductase subunit I 1"/>
    <property type="match status" value="1"/>
</dbReference>
<dbReference type="Gene3D" id="3.30.70.3270">
    <property type="match status" value="1"/>
</dbReference>
<dbReference type="HAMAP" id="MF_01351">
    <property type="entry name" value="NDH1_NuoI"/>
    <property type="match status" value="1"/>
</dbReference>
<dbReference type="InterPro" id="IPR017896">
    <property type="entry name" value="4Fe4S_Fe-S-bd"/>
</dbReference>
<dbReference type="InterPro" id="IPR017900">
    <property type="entry name" value="4Fe4S_Fe_S_CS"/>
</dbReference>
<dbReference type="InterPro" id="IPR010226">
    <property type="entry name" value="NADH_quinone_OxRdtase_chainI"/>
</dbReference>
<dbReference type="NCBIfam" id="TIGR01971">
    <property type="entry name" value="NuoI"/>
    <property type="match status" value="1"/>
</dbReference>
<dbReference type="NCBIfam" id="NF004538">
    <property type="entry name" value="PRK05888.1-4"/>
    <property type="match status" value="1"/>
</dbReference>
<dbReference type="NCBIfam" id="NF004539">
    <property type="entry name" value="PRK05888.1-5"/>
    <property type="match status" value="1"/>
</dbReference>
<dbReference type="PANTHER" id="PTHR10849:SF20">
    <property type="entry name" value="NADH DEHYDROGENASE [UBIQUINONE] IRON-SULFUR PROTEIN 8, MITOCHONDRIAL"/>
    <property type="match status" value="1"/>
</dbReference>
<dbReference type="PANTHER" id="PTHR10849">
    <property type="entry name" value="NADH DEHYDROGENASE UBIQUINONE IRON-SULFUR PROTEIN 8, MITOCHONDRIAL"/>
    <property type="match status" value="1"/>
</dbReference>
<dbReference type="Pfam" id="PF12838">
    <property type="entry name" value="Fer4_7"/>
    <property type="match status" value="1"/>
</dbReference>
<dbReference type="SUPFAM" id="SSF54862">
    <property type="entry name" value="4Fe-4S ferredoxins"/>
    <property type="match status" value="1"/>
</dbReference>
<dbReference type="PROSITE" id="PS00198">
    <property type="entry name" value="4FE4S_FER_1"/>
    <property type="match status" value="2"/>
</dbReference>
<dbReference type="PROSITE" id="PS51379">
    <property type="entry name" value="4FE4S_FER_2"/>
    <property type="match status" value="2"/>
</dbReference>
<proteinExistence type="inferred from homology"/>
<name>NUOI_RHIJ3</name>
<protein>
    <recommendedName>
        <fullName evidence="1">NADH-quinone oxidoreductase subunit I</fullName>
        <ecNumber evidence="1">7.1.1.-</ecNumber>
    </recommendedName>
    <alternativeName>
        <fullName evidence="1">NADH dehydrogenase I subunit I</fullName>
    </alternativeName>
    <alternativeName>
        <fullName evidence="1">NDH-1 subunit I</fullName>
    </alternativeName>
</protein>
<feature type="chain" id="PRO_0000250930" description="NADH-quinone oxidoreductase subunit I">
    <location>
        <begin position="1"/>
        <end position="163"/>
    </location>
</feature>
<feature type="domain" description="4Fe-4S ferredoxin-type 1" evidence="1">
    <location>
        <begin position="53"/>
        <end position="83"/>
    </location>
</feature>
<feature type="domain" description="4Fe-4S ferredoxin-type 2" evidence="1">
    <location>
        <begin position="94"/>
        <end position="123"/>
    </location>
</feature>
<feature type="binding site" evidence="1">
    <location>
        <position position="63"/>
    </location>
    <ligand>
        <name>[4Fe-4S] cluster</name>
        <dbReference type="ChEBI" id="CHEBI:49883"/>
        <label>1</label>
    </ligand>
</feature>
<feature type="binding site" evidence="1">
    <location>
        <position position="66"/>
    </location>
    <ligand>
        <name>[4Fe-4S] cluster</name>
        <dbReference type="ChEBI" id="CHEBI:49883"/>
        <label>1</label>
    </ligand>
</feature>
<feature type="binding site" evidence="1">
    <location>
        <position position="69"/>
    </location>
    <ligand>
        <name>[4Fe-4S] cluster</name>
        <dbReference type="ChEBI" id="CHEBI:49883"/>
        <label>1</label>
    </ligand>
</feature>
<feature type="binding site" evidence="1">
    <location>
        <position position="73"/>
    </location>
    <ligand>
        <name>[4Fe-4S] cluster</name>
        <dbReference type="ChEBI" id="CHEBI:49883"/>
        <label>2</label>
    </ligand>
</feature>
<feature type="binding site" evidence="1">
    <location>
        <position position="103"/>
    </location>
    <ligand>
        <name>[4Fe-4S] cluster</name>
        <dbReference type="ChEBI" id="CHEBI:49883"/>
        <label>2</label>
    </ligand>
</feature>
<feature type="binding site" evidence="1">
    <location>
        <position position="106"/>
    </location>
    <ligand>
        <name>[4Fe-4S] cluster</name>
        <dbReference type="ChEBI" id="CHEBI:49883"/>
        <label>2</label>
    </ligand>
</feature>
<feature type="binding site" evidence="1">
    <location>
        <position position="109"/>
    </location>
    <ligand>
        <name>[4Fe-4S] cluster</name>
        <dbReference type="ChEBI" id="CHEBI:49883"/>
        <label>2</label>
    </ligand>
</feature>
<feature type="binding site" evidence="1">
    <location>
        <position position="113"/>
    </location>
    <ligand>
        <name>[4Fe-4S] cluster</name>
        <dbReference type="ChEBI" id="CHEBI:49883"/>
        <label>1</label>
    </ligand>
</feature>
<sequence>MASLSGSISSLFLKEFVGAFFLSMRYFFRQKATINYPFEKGPVSPRFRGEHALRRYPNGEERCIACKLCEAICPAQAITIEAGPRRNDGTRRTVRYDIDMVKCIYCGFCQEACPVDAIVEGPNFEFATETREELYFDKARLLDNGDRWEREIARNIAIDSPYR</sequence>